<protein>
    <recommendedName>
        <fullName evidence="1">6,7-dimethyl-8-ribityllumazine synthase</fullName>
        <shortName evidence="1">DMRL synthase</shortName>
        <shortName evidence="1">LS</shortName>
        <shortName evidence="1">Lumazine synthase</shortName>
        <ecNumber evidence="1">2.5.1.78</ecNumber>
    </recommendedName>
</protein>
<proteinExistence type="inferred from homology"/>
<accession>B1ZJM3</accession>
<reference key="1">
    <citation type="submission" date="2008-04" db="EMBL/GenBank/DDBJ databases">
        <title>Complete sequence of chromosome of Methylobacterium populi BJ001.</title>
        <authorList>
            <consortium name="US DOE Joint Genome Institute"/>
            <person name="Copeland A."/>
            <person name="Lucas S."/>
            <person name="Lapidus A."/>
            <person name="Glavina del Rio T."/>
            <person name="Dalin E."/>
            <person name="Tice H."/>
            <person name="Bruce D."/>
            <person name="Goodwin L."/>
            <person name="Pitluck S."/>
            <person name="Chertkov O."/>
            <person name="Brettin T."/>
            <person name="Detter J.C."/>
            <person name="Han C."/>
            <person name="Kuske C.R."/>
            <person name="Schmutz J."/>
            <person name="Larimer F."/>
            <person name="Land M."/>
            <person name="Hauser L."/>
            <person name="Kyrpides N."/>
            <person name="Mikhailova N."/>
            <person name="Marx C."/>
            <person name="Richardson P."/>
        </authorList>
    </citation>
    <scope>NUCLEOTIDE SEQUENCE [LARGE SCALE GENOMIC DNA]</scope>
    <source>
        <strain>ATCC BAA-705 / NCIMB 13946 / BJ001</strain>
    </source>
</reference>
<name>RISB_METPB</name>
<comment type="function">
    <text evidence="1">Catalyzes the formation of 6,7-dimethyl-8-ribityllumazine by condensation of 5-amino-6-(D-ribitylamino)uracil with 3,4-dihydroxy-2-butanone 4-phosphate. This is the penultimate step in the biosynthesis of riboflavin.</text>
</comment>
<comment type="catalytic activity">
    <reaction evidence="1">
        <text>(2S)-2-hydroxy-3-oxobutyl phosphate + 5-amino-6-(D-ribitylamino)uracil = 6,7-dimethyl-8-(1-D-ribityl)lumazine + phosphate + 2 H2O + H(+)</text>
        <dbReference type="Rhea" id="RHEA:26152"/>
        <dbReference type="ChEBI" id="CHEBI:15377"/>
        <dbReference type="ChEBI" id="CHEBI:15378"/>
        <dbReference type="ChEBI" id="CHEBI:15934"/>
        <dbReference type="ChEBI" id="CHEBI:43474"/>
        <dbReference type="ChEBI" id="CHEBI:58201"/>
        <dbReference type="ChEBI" id="CHEBI:58830"/>
        <dbReference type="EC" id="2.5.1.78"/>
    </reaction>
</comment>
<comment type="pathway">
    <text evidence="1">Cofactor biosynthesis; riboflavin biosynthesis; riboflavin from 2-hydroxy-3-oxobutyl phosphate and 5-amino-6-(D-ribitylamino)uracil: step 1/2.</text>
</comment>
<comment type="similarity">
    <text evidence="1">Belongs to the DMRL synthase family.</text>
</comment>
<keyword id="KW-0686">Riboflavin biosynthesis</keyword>
<keyword id="KW-0808">Transferase</keyword>
<evidence type="ECO:0000255" key="1">
    <source>
        <dbReference type="HAMAP-Rule" id="MF_00178"/>
    </source>
</evidence>
<organism>
    <name type="scientific">Methylorubrum populi (strain ATCC BAA-705 / NCIMB 13946 / BJ001)</name>
    <name type="common">Methylobacterium populi</name>
    <dbReference type="NCBI Taxonomy" id="441620"/>
    <lineage>
        <taxon>Bacteria</taxon>
        <taxon>Pseudomonadati</taxon>
        <taxon>Pseudomonadota</taxon>
        <taxon>Alphaproteobacteria</taxon>
        <taxon>Hyphomicrobiales</taxon>
        <taxon>Methylobacteriaceae</taxon>
        <taxon>Methylorubrum</taxon>
    </lineage>
</organism>
<gene>
    <name evidence="1" type="primary">ribH</name>
    <name type="ordered locus">Mpop_3358</name>
</gene>
<feature type="chain" id="PRO_1000195499" description="6,7-dimethyl-8-ribityllumazine synthase">
    <location>
        <begin position="1"/>
        <end position="169"/>
    </location>
</feature>
<feature type="active site" description="Proton donor" evidence="1">
    <location>
        <position position="98"/>
    </location>
</feature>
<feature type="binding site" evidence="1">
    <location>
        <position position="30"/>
    </location>
    <ligand>
        <name>5-amino-6-(D-ribitylamino)uracil</name>
        <dbReference type="ChEBI" id="CHEBI:15934"/>
    </ligand>
</feature>
<feature type="binding site" evidence="1">
    <location>
        <begin position="61"/>
        <end position="63"/>
    </location>
    <ligand>
        <name>5-amino-6-(D-ribitylamino)uracil</name>
        <dbReference type="ChEBI" id="CHEBI:15934"/>
    </ligand>
</feature>
<feature type="binding site" evidence="1">
    <location>
        <begin position="90"/>
        <end position="92"/>
    </location>
    <ligand>
        <name>5-amino-6-(D-ribitylamino)uracil</name>
        <dbReference type="ChEBI" id="CHEBI:15934"/>
    </ligand>
</feature>
<feature type="binding site" evidence="1">
    <location>
        <begin position="95"/>
        <end position="96"/>
    </location>
    <ligand>
        <name>(2S)-2-hydroxy-3-oxobutyl phosphate</name>
        <dbReference type="ChEBI" id="CHEBI:58830"/>
    </ligand>
</feature>
<feature type="binding site" evidence="1">
    <location>
        <position position="123"/>
    </location>
    <ligand>
        <name>5-amino-6-(D-ribitylamino)uracil</name>
        <dbReference type="ChEBI" id="CHEBI:15934"/>
    </ligand>
</feature>
<feature type="binding site" evidence="1">
    <location>
        <position position="137"/>
    </location>
    <ligand>
        <name>(2S)-2-hydroxy-3-oxobutyl phosphate</name>
        <dbReference type="ChEBI" id="CHEBI:58830"/>
    </ligand>
</feature>
<dbReference type="EC" id="2.5.1.78" evidence="1"/>
<dbReference type="EMBL" id="CP001029">
    <property type="protein sequence ID" value="ACB81509.1"/>
    <property type="molecule type" value="Genomic_DNA"/>
</dbReference>
<dbReference type="RefSeq" id="WP_012455226.1">
    <property type="nucleotide sequence ID" value="NC_010725.1"/>
</dbReference>
<dbReference type="SMR" id="B1ZJM3"/>
<dbReference type="STRING" id="441620.Mpop_3358"/>
<dbReference type="KEGG" id="mpo:Mpop_3358"/>
<dbReference type="eggNOG" id="COG0054">
    <property type="taxonomic scope" value="Bacteria"/>
</dbReference>
<dbReference type="HOGENOM" id="CLU_089358_1_2_5"/>
<dbReference type="OrthoDB" id="9809709at2"/>
<dbReference type="UniPathway" id="UPA00275">
    <property type="reaction ID" value="UER00404"/>
</dbReference>
<dbReference type="Proteomes" id="UP000007136">
    <property type="component" value="Chromosome"/>
</dbReference>
<dbReference type="GO" id="GO:0005829">
    <property type="term" value="C:cytosol"/>
    <property type="evidence" value="ECO:0007669"/>
    <property type="project" value="TreeGrafter"/>
</dbReference>
<dbReference type="GO" id="GO:0009349">
    <property type="term" value="C:riboflavin synthase complex"/>
    <property type="evidence" value="ECO:0007669"/>
    <property type="project" value="InterPro"/>
</dbReference>
<dbReference type="GO" id="GO:0000906">
    <property type="term" value="F:6,7-dimethyl-8-ribityllumazine synthase activity"/>
    <property type="evidence" value="ECO:0007669"/>
    <property type="project" value="UniProtKB-UniRule"/>
</dbReference>
<dbReference type="GO" id="GO:0009231">
    <property type="term" value="P:riboflavin biosynthetic process"/>
    <property type="evidence" value="ECO:0007669"/>
    <property type="project" value="UniProtKB-UniRule"/>
</dbReference>
<dbReference type="CDD" id="cd09209">
    <property type="entry name" value="Lumazine_synthase-I"/>
    <property type="match status" value="1"/>
</dbReference>
<dbReference type="Gene3D" id="3.40.50.960">
    <property type="entry name" value="Lumazine/riboflavin synthase"/>
    <property type="match status" value="1"/>
</dbReference>
<dbReference type="HAMAP" id="MF_00178">
    <property type="entry name" value="Lumazine_synth"/>
    <property type="match status" value="1"/>
</dbReference>
<dbReference type="InterPro" id="IPR034964">
    <property type="entry name" value="LS"/>
</dbReference>
<dbReference type="InterPro" id="IPR002180">
    <property type="entry name" value="LS/RS"/>
</dbReference>
<dbReference type="InterPro" id="IPR036467">
    <property type="entry name" value="LS/RS_sf"/>
</dbReference>
<dbReference type="NCBIfam" id="TIGR00114">
    <property type="entry name" value="lumazine-synth"/>
    <property type="match status" value="1"/>
</dbReference>
<dbReference type="PANTHER" id="PTHR21058:SF0">
    <property type="entry name" value="6,7-DIMETHYL-8-RIBITYLLUMAZINE SYNTHASE"/>
    <property type="match status" value="1"/>
</dbReference>
<dbReference type="PANTHER" id="PTHR21058">
    <property type="entry name" value="6,7-DIMETHYL-8-RIBITYLLUMAZINE SYNTHASE DMRL SYNTHASE LUMAZINE SYNTHASE"/>
    <property type="match status" value="1"/>
</dbReference>
<dbReference type="Pfam" id="PF00885">
    <property type="entry name" value="DMRL_synthase"/>
    <property type="match status" value="1"/>
</dbReference>
<dbReference type="SUPFAM" id="SSF52121">
    <property type="entry name" value="Lumazine synthase"/>
    <property type="match status" value="1"/>
</dbReference>
<sequence>MVSQRRDADAPKSILESLAGTRVLVVEARYYDDIADELLAGARAAIEAVGAEARIFTVPGALEIPSAIAILMEAGRKAGGPYDAAVALGCVIRGETGHYDIVAGESARALMDLSVSEHLPLGNGILTVETMEQALARARVSEMNKGGGAAEAALSLLAIKRAANLEPAR</sequence>